<proteinExistence type="inferred from homology"/>
<sequence>MIQITVVQIDNYGPWTVTPNPRRESDLQALQSRLYCDMNLQFGAHRGLAFYTRFDNIIAITNGIDLETHKRIQNSVKNRYPFTVSMAVASAETAYEAQKLATETIQEYGSAQDDVRKEVLDVANEFVSNGYVQLAHVDINDITGKLTDLETAYDTYLSVQMTKLKLMEELKKYDSMGFFIGGDNFMCPCNGMSEKDFLCMFEDIRDSCGIDLKAGIGIGKTAEDASNLADIGLEVIREGKTDFQVYTLKQSIEERKDITYNYMCPI</sequence>
<evidence type="ECO:0000255" key="1">
    <source>
        <dbReference type="HAMAP-Rule" id="MF_00608"/>
    </source>
</evidence>
<gene>
    <name evidence="1" type="primary">gch3</name>
    <name type="ordered locus">MmarC7_1403</name>
</gene>
<protein>
    <recommendedName>
        <fullName evidence="1">GTP cyclohydrolase III</fullName>
        <ecNumber evidence="1">3.5.4.29</ecNumber>
    </recommendedName>
</protein>
<dbReference type="EC" id="3.5.4.29" evidence="1"/>
<dbReference type="EMBL" id="CP000745">
    <property type="protein sequence ID" value="ABR66466.1"/>
    <property type="molecule type" value="Genomic_DNA"/>
</dbReference>
<dbReference type="SMR" id="A6VJ40"/>
<dbReference type="STRING" id="426368.MmarC7_1403"/>
<dbReference type="KEGG" id="mmz:MmarC7_1403"/>
<dbReference type="eggNOG" id="arCOG04202">
    <property type="taxonomic scope" value="Archaea"/>
</dbReference>
<dbReference type="HOGENOM" id="CLU_080076_0_0_2"/>
<dbReference type="OrthoDB" id="25211at2157"/>
<dbReference type="GO" id="GO:0005525">
    <property type="term" value="F:GTP binding"/>
    <property type="evidence" value="ECO:0007669"/>
    <property type="project" value="UniProtKB-KW"/>
</dbReference>
<dbReference type="GO" id="GO:0043740">
    <property type="term" value="F:GTP cyclohydrolase IIa activity"/>
    <property type="evidence" value="ECO:0007669"/>
    <property type="project" value="UniProtKB-EC"/>
</dbReference>
<dbReference type="GO" id="GO:0009058">
    <property type="term" value="P:biosynthetic process"/>
    <property type="evidence" value="ECO:0007669"/>
    <property type="project" value="InterPro"/>
</dbReference>
<dbReference type="Gene3D" id="3.30.70.270">
    <property type="match status" value="1"/>
</dbReference>
<dbReference type="Gene3D" id="3.30.70.1230">
    <property type="entry name" value="Nucleotide cyclase"/>
    <property type="match status" value="1"/>
</dbReference>
<dbReference type="HAMAP" id="MF_00608">
    <property type="entry name" value="GTP_cyclohydro_3"/>
    <property type="match status" value="1"/>
</dbReference>
<dbReference type="InterPro" id="IPR007839">
    <property type="entry name" value="GTP_CycHdrlase_3"/>
</dbReference>
<dbReference type="InterPro" id="IPR029787">
    <property type="entry name" value="Nucleotide_cyclase"/>
</dbReference>
<dbReference type="InterPro" id="IPR043128">
    <property type="entry name" value="Rev_trsase/Diguanyl_cyclase"/>
</dbReference>
<dbReference type="NCBIfam" id="NF002587">
    <property type="entry name" value="PRK02240.1"/>
    <property type="match status" value="1"/>
</dbReference>
<dbReference type="PANTHER" id="PTHR42202">
    <property type="entry name" value="GTP CYCLOHYDROLASE III"/>
    <property type="match status" value="1"/>
</dbReference>
<dbReference type="PANTHER" id="PTHR42202:SF1">
    <property type="entry name" value="GTP CYCLOHYDROLASE III"/>
    <property type="match status" value="1"/>
</dbReference>
<dbReference type="Pfam" id="PF05165">
    <property type="entry name" value="GCH_III"/>
    <property type="match status" value="1"/>
</dbReference>
<dbReference type="PIRSF" id="PIRSF009265">
    <property type="entry name" value="GTP_cyclohydro_3"/>
    <property type="match status" value="1"/>
</dbReference>
<accession>A6VJ40</accession>
<feature type="chain" id="PRO_1000056692" description="GTP cyclohydrolase III">
    <location>
        <begin position="1"/>
        <end position="266"/>
    </location>
</feature>
<name>GCH3_METM7</name>
<comment type="function">
    <text evidence="1">Catalyzes the formation of 2-amino-5-formylamino-6-ribofuranosylamino-4(3H)-pyrimidinone ribonucleotide monophosphate and inorganic phosphate from GTP. Also has an independent pyrophosphate phosphohydrolase activity.</text>
</comment>
<comment type="catalytic activity">
    <reaction evidence="1">
        <text>GTP + 3 H2O = 2-amino-5-formylamino-6-(5-phospho-D-ribosylamino)pyrimidin-4(3H)-one + 2 phosphate + 2 H(+)</text>
        <dbReference type="Rhea" id="RHEA:22468"/>
        <dbReference type="ChEBI" id="CHEBI:15377"/>
        <dbReference type="ChEBI" id="CHEBI:15378"/>
        <dbReference type="ChEBI" id="CHEBI:37565"/>
        <dbReference type="ChEBI" id="CHEBI:43474"/>
        <dbReference type="ChEBI" id="CHEBI:57258"/>
        <dbReference type="EC" id="3.5.4.29"/>
    </reaction>
</comment>
<comment type="similarity">
    <text evidence="1">Belongs to the archaeal-type GTP cyclohydrolase family.</text>
</comment>
<keyword id="KW-0342">GTP-binding</keyword>
<keyword id="KW-0378">Hydrolase</keyword>
<keyword id="KW-0547">Nucleotide-binding</keyword>
<reference key="1">
    <citation type="submission" date="2007-06" db="EMBL/GenBank/DDBJ databases">
        <title>Complete sequence of Methanococcus maripaludis C7.</title>
        <authorList>
            <consortium name="US DOE Joint Genome Institute"/>
            <person name="Copeland A."/>
            <person name="Lucas S."/>
            <person name="Lapidus A."/>
            <person name="Barry K."/>
            <person name="Glavina del Rio T."/>
            <person name="Dalin E."/>
            <person name="Tice H."/>
            <person name="Pitluck S."/>
            <person name="Clum A."/>
            <person name="Schmutz J."/>
            <person name="Larimer F."/>
            <person name="Land M."/>
            <person name="Hauser L."/>
            <person name="Kyrpides N."/>
            <person name="Anderson I."/>
            <person name="Sieprawska-Lupa M."/>
            <person name="Whitman W.B."/>
            <person name="Richardson P."/>
        </authorList>
    </citation>
    <scope>NUCLEOTIDE SEQUENCE [LARGE SCALE GENOMIC DNA]</scope>
    <source>
        <strain>C7 / ATCC BAA-1331</strain>
    </source>
</reference>
<organism>
    <name type="scientific">Methanococcus maripaludis (strain C7 / ATCC BAA-1331)</name>
    <dbReference type="NCBI Taxonomy" id="426368"/>
    <lineage>
        <taxon>Archaea</taxon>
        <taxon>Methanobacteriati</taxon>
        <taxon>Methanobacteriota</taxon>
        <taxon>Methanomada group</taxon>
        <taxon>Methanococci</taxon>
        <taxon>Methanococcales</taxon>
        <taxon>Methanococcaceae</taxon>
        <taxon>Methanococcus</taxon>
    </lineage>
</organism>